<name>SUOX_MACFA</name>
<organism>
    <name type="scientific">Macaca fascicularis</name>
    <name type="common">Crab-eating macaque</name>
    <name type="synonym">Cynomolgus monkey</name>
    <dbReference type="NCBI Taxonomy" id="9541"/>
    <lineage>
        <taxon>Eukaryota</taxon>
        <taxon>Metazoa</taxon>
        <taxon>Chordata</taxon>
        <taxon>Craniata</taxon>
        <taxon>Vertebrata</taxon>
        <taxon>Euteleostomi</taxon>
        <taxon>Mammalia</taxon>
        <taxon>Eutheria</taxon>
        <taxon>Euarchontoglires</taxon>
        <taxon>Primates</taxon>
        <taxon>Haplorrhini</taxon>
        <taxon>Catarrhini</taxon>
        <taxon>Cercopithecidae</taxon>
        <taxon>Cercopithecinae</taxon>
        <taxon>Macaca</taxon>
    </lineage>
</organism>
<comment type="function">
    <text evidence="3">Catalyzes the oxidation of sulfite to sulfate, the terminal reaction in the oxidative degradation of sulfur-containing amino acids.</text>
</comment>
<comment type="catalytic activity">
    <reaction evidence="3">
        <text>sulfite + O2 + H2O = sulfate + H2O2</text>
        <dbReference type="Rhea" id="RHEA:24600"/>
        <dbReference type="ChEBI" id="CHEBI:15377"/>
        <dbReference type="ChEBI" id="CHEBI:15379"/>
        <dbReference type="ChEBI" id="CHEBI:16189"/>
        <dbReference type="ChEBI" id="CHEBI:16240"/>
        <dbReference type="ChEBI" id="CHEBI:17359"/>
        <dbReference type="EC" id="1.8.3.1"/>
    </reaction>
    <physiologicalReaction direction="left-to-right" evidence="3">
        <dbReference type="Rhea" id="RHEA:24601"/>
    </physiologicalReaction>
</comment>
<comment type="cofactor">
    <cofactor evidence="3">
        <name>heme b</name>
        <dbReference type="ChEBI" id="CHEBI:60344"/>
    </cofactor>
    <text evidence="3">Binds 1 heme b (iron(II)-protoporphyrin IX) group non-covalently per subunit.</text>
</comment>
<comment type="cofactor">
    <cofactor evidence="3">
        <name>Mo-molybdopterin</name>
        <dbReference type="ChEBI" id="CHEBI:71302"/>
    </cofactor>
    <text evidence="3">Binds 1 Mo-molybdopterin (Mo-MPT) cofactor per subunit.</text>
</comment>
<comment type="pathway">
    <text evidence="3">Energy metabolism; sulfur metabolism.</text>
</comment>
<comment type="subunit">
    <text evidence="3">Homodimer.</text>
</comment>
<comment type="subcellular location">
    <subcellularLocation>
        <location evidence="3">Mitochondrion intermembrane space</location>
    </subcellularLocation>
</comment>
<protein>
    <recommendedName>
        <fullName>Sulfite oxidase, mitochondrial</fullName>
        <ecNumber evidence="3">1.8.3.1</ecNumber>
    </recommendedName>
</protein>
<keyword id="KW-0349">Heme</keyword>
<keyword id="KW-0408">Iron</keyword>
<keyword id="KW-0479">Metal-binding</keyword>
<keyword id="KW-0496">Mitochondrion</keyword>
<keyword id="KW-0500">Molybdenum</keyword>
<keyword id="KW-0560">Oxidoreductase</keyword>
<keyword id="KW-0597">Phosphoprotein</keyword>
<keyword id="KW-1185">Reference proteome</keyword>
<keyword id="KW-0809">Transit peptide</keyword>
<proteinExistence type="evidence at transcript level"/>
<gene>
    <name type="primary">SUOX</name>
    <name evidence="5" type="ORF">QccE-18442</name>
</gene>
<dbReference type="EC" id="1.8.3.1" evidence="3"/>
<dbReference type="EMBL" id="AB125197">
    <property type="protein sequence ID" value="BAD51985.1"/>
    <property type="molecule type" value="mRNA"/>
</dbReference>
<dbReference type="RefSeq" id="NP_001306533.1">
    <property type="nucleotide sequence ID" value="NM_001319604.1"/>
</dbReference>
<dbReference type="SMR" id="Q60HD0"/>
<dbReference type="STRING" id="9541.ENSMFAP00000042310"/>
<dbReference type="eggNOG" id="KOG0535">
    <property type="taxonomic scope" value="Eukaryota"/>
</dbReference>
<dbReference type="eggNOG" id="KOG4576">
    <property type="taxonomic scope" value="Eukaryota"/>
</dbReference>
<dbReference type="UniPathway" id="UPA00096"/>
<dbReference type="Proteomes" id="UP000233100">
    <property type="component" value="Unplaced"/>
</dbReference>
<dbReference type="GO" id="GO:0005758">
    <property type="term" value="C:mitochondrial intermembrane space"/>
    <property type="evidence" value="ECO:0007669"/>
    <property type="project" value="UniProtKB-SubCell"/>
</dbReference>
<dbReference type="GO" id="GO:0020037">
    <property type="term" value="F:heme binding"/>
    <property type="evidence" value="ECO:0007669"/>
    <property type="project" value="TreeGrafter"/>
</dbReference>
<dbReference type="GO" id="GO:0030151">
    <property type="term" value="F:molybdenum ion binding"/>
    <property type="evidence" value="ECO:0007669"/>
    <property type="project" value="InterPro"/>
</dbReference>
<dbReference type="GO" id="GO:0043546">
    <property type="term" value="F:molybdopterin cofactor binding"/>
    <property type="evidence" value="ECO:0007669"/>
    <property type="project" value="InterPro"/>
</dbReference>
<dbReference type="GO" id="GO:0008482">
    <property type="term" value="F:sulfite oxidase activity"/>
    <property type="evidence" value="ECO:0007669"/>
    <property type="project" value="UniProtKB-EC"/>
</dbReference>
<dbReference type="GO" id="GO:0006790">
    <property type="term" value="P:sulfur compound metabolic process"/>
    <property type="evidence" value="ECO:0007669"/>
    <property type="project" value="UniProtKB-UniPathway"/>
</dbReference>
<dbReference type="CDD" id="cd02111">
    <property type="entry name" value="eukary_SO_Moco"/>
    <property type="match status" value="1"/>
</dbReference>
<dbReference type="FunFam" id="2.60.40.650:FF:000003">
    <property type="entry name" value="Sulfite oxidase, mitochondrial"/>
    <property type="match status" value="1"/>
</dbReference>
<dbReference type="FunFam" id="3.10.120.10:FF:000007">
    <property type="entry name" value="Sulfite oxidase, mitochondrial"/>
    <property type="match status" value="1"/>
</dbReference>
<dbReference type="FunFam" id="3.90.420.10:FF:000002">
    <property type="entry name" value="sulfite oxidase, mitochondrial"/>
    <property type="match status" value="1"/>
</dbReference>
<dbReference type="Gene3D" id="2.60.40.650">
    <property type="match status" value="1"/>
</dbReference>
<dbReference type="Gene3D" id="3.10.120.10">
    <property type="entry name" value="Cytochrome b5-like heme/steroid binding domain"/>
    <property type="match status" value="1"/>
</dbReference>
<dbReference type="Gene3D" id="3.90.420.10">
    <property type="entry name" value="Oxidoreductase, molybdopterin-binding domain"/>
    <property type="match status" value="1"/>
</dbReference>
<dbReference type="InterPro" id="IPR001199">
    <property type="entry name" value="Cyt_B5-like_heme/steroid-bd"/>
</dbReference>
<dbReference type="InterPro" id="IPR036400">
    <property type="entry name" value="Cyt_B5-like_heme/steroid_sf"/>
</dbReference>
<dbReference type="InterPro" id="IPR014756">
    <property type="entry name" value="Ig_E-set"/>
</dbReference>
<dbReference type="InterPro" id="IPR005066">
    <property type="entry name" value="MoCF_OxRdtse_dimer"/>
</dbReference>
<dbReference type="InterPro" id="IPR008335">
    <property type="entry name" value="Mopterin_OxRdtase_euk"/>
</dbReference>
<dbReference type="InterPro" id="IPR000572">
    <property type="entry name" value="OxRdtase_Mopterin-bd_dom"/>
</dbReference>
<dbReference type="InterPro" id="IPR036374">
    <property type="entry name" value="OxRdtase_Mopterin-bd_sf"/>
</dbReference>
<dbReference type="InterPro" id="IPR022407">
    <property type="entry name" value="OxRdtase_Mopterin_BS"/>
</dbReference>
<dbReference type="PANTHER" id="PTHR19372:SF7">
    <property type="entry name" value="SULFITE OXIDASE, MITOCHONDRIAL"/>
    <property type="match status" value="1"/>
</dbReference>
<dbReference type="PANTHER" id="PTHR19372">
    <property type="entry name" value="SULFITE REDUCTASE"/>
    <property type="match status" value="1"/>
</dbReference>
<dbReference type="Pfam" id="PF00173">
    <property type="entry name" value="Cyt-b5"/>
    <property type="match status" value="1"/>
</dbReference>
<dbReference type="Pfam" id="PF03404">
    <property type="entry name" value="Mo-co_dimer"/>
    <property type="match status" value="1"/>
</dbReference>
<dbReference type="Pfam" id="PF00174">
    <property type="entry name" value="Oxidored_molyb"/>
    <property type="match status" value="1"/>
</dbReference>
<dbReference type="PRINTS" id="PR00363">
    <property type="entry name" value="CYTOCHROMEB5"/>
</dbReference>
<dbReference type="PRINTS" id="PR00407">
    <property type="entry name" value="EUMOPTERIN"/>
</dbReference>
<dbReference type="SMART" id="SM01117">
    <property type="entry name" value="Cyt-b5"/>
    <property type="match status" value="1"/>
</dbReference>
<dbReference type="SUPFAM" id="SSF55856">
    <property type="entry name" value="Cytochrome b5-like heme/steroid binding domain"/>
    <property type="match status" value="1"/>
</dbReference>
<dbReference type="SUPFAM" id="SSF81296">
    <property type="entry name" value="E set domains"/>
    <property type="match status" value="1"/>
</dbReference>
<dbReference type="SUPFAM" id="SSF56524">
    <property type="entry name" value="Oxidoreductase molybdopterin-binding domain"/>
    <property type="match status" value="1"/>
</dbReference>
<dbReference type="PROSITE" id="PS50255">
    <property type="entry name" value="CYTOCHROME_B5_2"/>
    <property type="match status" value="1"/>
</dbReference>
<dbReference type="PROSITE" id="PS00559">
    <property type="entry name" value="MOLYBDOPTERIN_EUK"/>
    <property type="match status" value="1"/>
</dbReference>
<sequence length="545" mass="60193">MLLLHRAVVLRLQQACRLKSIPSRIYIQACSTNDSFRPQYPSLTFSGDNSSTRGWKVMGTLLGLGAVLAYQDHRCRAAQESTRIYTKEEVSSHTSPETGIWVALGSEVFDVTEFADLHPGGPSKLMLAAGGPLEPFWALYAVHNQSHVRELLAQYKVGELNPEDKVAPTVETSDPYADDPVRHPALKVNSQRPFNAEPPPELLTENYITPNPIFFTRNHLPVPNLDPDTYRLHIVGAPGGQSLSLSLDDLHNFPKYEITVTLQCAGNRRSEMTQVKEVKGLEWRTGAISTARWAGARLCDVLAKAGHQLCETEAHVCFEGLDSDPTGTAYGASIPLARAMDPEAGVLLAYEMNGQPLPRDHGFPVRVVVPGVVGARHVKWLGRVSVQPEESYSHWQRRDYKGFSPSVDWDTVDFDSAPSIQELPVQSAITEPRDGETVESGEVTIKGYAWSGGGRAVIRVDVSLDGGLTWQVAKLDGEEQRPRKAWAWRLWQLQAPVPAGQKELNIVCKAVDDGYNVQPDTVAPIWNLRGVLSNAWHRVHVFVAP</sequence>
<evidence type="ECO:0000250" key="1">
    <source>
        <dbReference type="UniProtKB" id="P07850"/>
    </source>
</evidence>
<evidence type="ECO:0000250" key="2">
    <source>
        <dbReference type="UniProtKB" id="P51687"/>
    </source>
</evidence>
<evidence type="ECO:0000250" key="3">
    <source>
        <dbReference type="UniProtKB" id="Q07116"/>
    </source>
</evidence>
<evidence type="ECO:0000255" key="4">
    <source>
        <dbReference type="PROSITE-ProRule" id="PRU00279"/>
    </source>
</evidence>
<evidence type="ECO:0000303" key="5">
    <source ref="1"/>
</evidence>
<feature type="transit peptide" description="Mitochondrion" evidence="3">
    <location>
        <begin position="1"/>
        <end position="79"/>
    </location>
</feature>
<feature type="chain" id="PRO_0000006482" description="Sulfite oxidase, mitochondrial">
    <location>
        <begin position="80"/>
        <end position="545"/>
    </location>
</feature>
<feature type="domain" description="Cytochrome b5 heme-binding" evidence="4">
    <location>
        <begin position="82"/>
        <end position="161"/>
    </location>
</feature>
<feature type="region of interest" description="Hinge" evidence="1">
    <location>
        <begin position="165"/>
        <end position="174"/>
    </location>
</feature>
<feature type="region of interest" description="Moco domain" evidence="1">
    <location>
        <begin position="175"/>
        <end position="401"/>
    </location>
</feature>
<feature type="region of interest" description="Homodimerization" evidence="1">
    <location>
        <begin position="402"/>
        <end position="538"/>
    </location>
</feature>
<feature type="binding site" description="axial binding residue" evidence="4">
    <location>
        <position position="118"/>
    </location>
    <ligand>
        <name>heme b</name>
        <dbReference type="ChEBI" id="CHEBI:60344"/>
    </ligand>
    <ligandPart>
        <name>Fe</name>
        <dbReference type="ChEBI" id="CHEBI:18248"/>
    </ligandPart>
</feature>
<feature type="binding site" description="axial binding residue" evidence="4">
    <location>
        <position position="143"/>
    </location>
    <ligand>
        <name>heme b</name>
        <dbReference type="ChEBI" id="CHEBI:60344"/>
    </ligand>
    <ligandPart>
        <name>Fe</name>
        <dbReference type="ChEBI" id="CHEBI:18248"/>
    </ligandPart>
</feature>
<feature type="binding site" evidence="2">
    <location>
        <position position="145"/>
    </location>
    <ligand>
        <name>heme b</name>
        <dbReference type="ChEBI" id="CHEBI:60344"/>
    </ligand>
</feature>
<feature type="binding site" evidence="1">
    <location>
        <position position="147"/>
    </location>
    <ligand>
        <name>heme b</name>
        <dbReference type="ChEBI" id="CHEBI:60344"/>
    </ligand>
</feature>
<feature type="binding site" evidence="1">
    <location>
        <begin position="215"/>
        <end position="219"/>
    </location>
    <ligand>
        <name>Mo-molybdopterin</name>
        <dbReference type="ChEBI" id="CHEBI:71302"/>
    </ligand>
</feature>
<feature type="binding site" evidence="1">
    <location>
        <position position="264"/>
    </location>
    <ligand>
        <name>Mo-molybdopterin</name>
        <dbReference type="ChEBI" id="CHEBI:71302"/>
    </ligand>
    <ligandPart>
        <name>Mo</name>
        <dbReference type="ChEBI" id="CHEBI:28685"/>
    </ligandPart>
</feature>
<feature type="binding site" evidence="1">
    <location>
        <position position="322"/>
    </location>
    <ligand>
        <name>Mo-molybdopterin</name>
        <dbReference type="ChEBI" id="CHEBI:71302"/>
    </ligand>
</feature>
<feature type="binding site" evidence="1">
    <location>
        <position position="361"/>
    </location>
    <ligand>
        <name>Mo-molybdopterin</name>
        <dbReference type="ChEBI" id="CHEBI:71302"/>
    </ligand>
</feature>
<feature type="binding site" evidence="1">
    <location>
        <position position="366"/>
    </location>
    <ligand>
        <name>Mo-molybdopterin</name>
        <dbReference type="ChEBI" id="CHEBI:71302"/>
    </ligand>
</feature>
<feature type="binding site" evidence="1">
    <location>
        <begin position="377"/>
        <end position="379"/>
    </location>
    <ligand>
        <name>Mo-molybdopterin</name>
        <dbReference type="ChEBI" id="CHEBI:71302"/>
    </ligand>
</feature>
<feature type="modified residue" description="Phosphoserine" evidence="2">
    <location>
        <position position="123"/>
    </location>
</feature>
<reference key="1">
    <citation type="submission" date="2003-10" db="EMBL/GenBank/DDBJ databases">
        <title>Isolation and characterization of cDNA for macaque neurological disease genes.</title>
        <authorList>
            <person name="Kusuda J."/>
            <person name="Osada N."/>
            <person name="Tanuma R."/>
            <person name="Hirata M."/>
            <person name="Sugano S."/>
            <person name="Hashimoto K."/>
        </authorList>
    </citation>
    <scope>NUCLEOTIDE SEQUENCE [LARGE SCALE MRNA]</scope>
    <source>
        <tissue>Brain cortex</tissue>
    </source>
</reference>
<accession>Q60HD0</accession>